<comment type="function">
    <text evidence="1">Catalyzes the attachment of alanine to tRNA(Ala) in a two-step reaction: alanine is first activated by ATP to form Ala-AMP and then transferred to the acceptor end of tRNA(Ala). Also edits incorrectly charged Ser-tRNA(Ala) and Gly-tRNA(Ala) via its editing domain.</text>
</comment>
<comment type="catalytic activity">
    <reaction evidence="1">
        <text>tRNA(Ala) + L-alanine + ATP = L-alanyl-tRNA(Ala) + AMP + diphosphate</text>
        <dbReference type="Rhea" id="RHEA:12540"/>
        <dbReference type="Rhea" id="RHEA-COMP:9657"/>
        <dbReference type="Rhea" id="RHEA-COMP:9923"/>
        <dbReference type="ChEBI" id="CHEBI:30616"/>
        <dbReference type="ChEBI" id="CHEBI:33019"/>
        <dbReference type="ChEBI" id="CHEBI:57972"/>
        <dbReference type="ChEBI" id="CHEBI:78442"/>
        <dbReference type="ChEBI" id="CHEBI:78497"/>
        <dbReference type="ChEBI" id="CHEBI:456215"/>
        <dbReference type="EC" id="6.1.1.7"/>
    </reaction>
</comment>
<comment type="cofactor">
    <cofactor evidence="1">
        <name>Zn(2+)</name>
        <dbReference type="ChEBI" id="CHEBI:29105"/>
    </cofactor>
    <text evidence="1">Binds 1 zinc ion per subunit.</text>
</comment>
<comment type="subcellular location">
    <subcellularLocation>
        <location evidence="1">Cytoplasm</location>
    </subcellularLocation>
</comment>
<comment type="domain">
    <text evidence="1">Consists of three domains; the N-terminal catalytic domain, the editing domain and the C-terminal C-Ala domain. The editing domain removes incorrectly charged amino acids, while the C-Ala domain, along with tRNA(Ala), serves as a bridge to cooperatively bring together the editing and aminoacylation centers thus stimulating deacylation of misacylated tRNAs.</text>
</comment>
<comment type="similarity">
    <text evidence="1">Belongs to the class-II aminoacyl-tRNA synthetase family.</text>
</comment>
<comment type="sequence caution" evidence="2">
    <conflict type="erroneous initiation">
        <sequence resource="EMBL-CDS" id="AAZ68197"/>
    </conflict>
</comment>
<keyword id="KW-0030">Aminoacyl-tRNA synthetase</keyword>
<keyword id="KW-0067">ATP-binding</keyword>
<keyword id="KW-0963">Cytoplasm</keyword>
<keyword id="KW-0436">Ligase</keyword>
<keyword id="KW-0479">Metal-binding</keyword>
<keyword id="KW-0547">Nucleotide-binding</keyword>
<keyword id="KW-0648">Protein biosynthesis</keyword>
<keyword id="KW-0694">RNA-binding</keyword>
<keyword id="KW-0820">tRNA-binding</keyword>
<keyword id="KW-0862">Zinc</keyword>
<accession>Q3YSV8</accession>
<sequence>MKESNLVGDIRKLFVDFFIKNGHQLFPSSPLIVKDDPSLLFTNAGMVQFKHVFTDASNANVGTAVSSQKCLRVGGKHNDLENVGYTNRHHTFFEMLGNFSFGDYFKEFAVELAWSFVTKELALNKDKLYFTVYHEDQETFDLWKKISGFSENRIIKIKTNDNFWSMGSTGPCGPCSEIFYDYGEDIEGGLPGTPEEDGARFTEIWNLVFMQYNRKSDGELCALPKKCIDTGMGLERISAVMQGVHDNYDINLFKDLIKVSKKQSGNTNNELAHRVIADHVRSAAFLIAEGLTPGNEGRDYILRRIIRRAARYVYMLKYDGALMYQIFPSLIDEKSYAYMADYYPELINAKDLIISILKIEEENFKDTLVKALPLLEKELVGLSSGGVLPGDIAFKLYDTYGFPVDITLDIIKEKGIKFDEQGFYDQMDKQKERSKLNHSIKSVQQLKGKLWVDIKEHYGGTKFVGYEQYSTRAKVLSIIYEGDKSTEVANVGDRVNVLLDITPFYAESGGQKGDTGVFNVIVRQGKELLSCDDVVEVLDTKKVLDTLYIHECVIKTGSLIVGDIICAEVNCEKRKNLCANHSATHLLHYVLKSVIDRSIIQKGSLVSDDKLRFDFSYGVALTKEQLTLIEDKMFSLIRNNSPVVTHICDLKEAIADGAVALFTEKYEDHGVRVINIGDSKELCCGTHVRYTGEIGCFKIVSEASVACGVRRIEAVTGQHAIDYFREQEKMLHLIAESVKSPIDNILIQIDKLNRNNQELKQKLSDAYFSVINLQGIATDKIGSIDFLYSSLNSVPIDVVRKFINEHLVNDMIMFFSNVVGRNVMYVIGVASNLHSKIKATDFVEIIGEVIKSKGGGNNQLAQISGEYIKEVDVIFHVKNKLINVLRN</sequence>
<name>SYA_EHRCJ</name>
<feature type="chain" id="PRO_0000075108" description="Alanine--tRNA ligase">
    <location>
        <begin position="1"/>
        <end position="887"/>
    </location>
</feature>
<feature type="binding site" evidence="1">
    <location>
        <position position="581"/>
    </location>
    <ligand>
        <name>Zn(2+)</name>
        <dbReference type="ChEBI" id="CHEBI:29105"/>
    </ligand>
</feature>
<feature type="binding site" evidence="1">
    <location>
        <position position="585"/>
    </location>
    <ligand>
        <name>Zn(2+)</name>
        <dbReference type="ChEBI" id="CHEBI:29105"/>
    </ligand>
</feature>
<feature type="binding site" evidence="1">
    <location>
        <position position="683"/>
    </location>
    <ligand>
        <name>Zn(2+)</name>
        <dbReference type="ChEBI" id="CHEBI:29105"/>
    </ligand>
</feature>
<feature type="binding site" evidence="1">
    <location>
        <position position="687"/>
    </location>
    <ligand>
        <name>Zn(2+)</name>
        <dbReference type="ChEBI" id="CHEBI:29105"/>
    </ligand>
</feature>
<protein>
    <recommendedName>
        <fullName evidence="1">Alanine--tRNA ligase</fullName>
        <ecNumber evidence="1">6.1.1.7</ecNumber>
    </recommendedName>
    <alternativeName>
        <fullName evidence="1">Alanyl-tRNA synthetase</fullName>
        <shortName evidence="1">AlaRS</shortName>
    </alternativeName>
</protein>
<proteinExistence type="inferred from homology"/>
<organism>
    <name type="scientific">Ehrlichia canis (strain Jake)</name>
    <dbReference type="NCBI Taxonomy" id="269484"/>
    <lineage>
        <taxon>Bacteria</taxon>
        <taxon>Pseudomonadati</taxon>
        <taxon>Pseudomonadota</taxon>
        <taxon>Alphaproteobacteria</taxon>
        <taxon>Rickettsiales</taxon>
        <taxon>Anaplasmataceae</taxon>
        <taxon>Ehrlichia</taxon>
    </lineage>
</organism>
<dbReference type="EC" id="6.1.1.7" evidence="1"/>
<dbReference type="EMBL" id="CP000107">
    <property type="protein sequence ID" value="AAZ68197.1"/>
    <property type="status" value="ALT_INIT"/>
    <property type="molecule type" value="Genomic_DNA"/>
</dbReference>
<dbReference type="RefSeq" id="WP_044262106.1">
    <property type="nucleotide sequence ID" value="NC_007354.1"/>
</dbReference>
<dbReference type="SMR" id="Q3YSV8"/>
<dbReference type="FunCoup" id="Q3YSV8">
    <property type="interactions" value="330"/>
</dbReference>
<dbReference type="STRING" id="269484.Ecaj_0146"/>
<dbReference type="KEGG" id="ecn:Ecaj_0146"/>
<dbReference type="eggNOG" id="COG0013">
    <property type="taxonomic scope" value="Bacteria"/>
</dbReference>
<dbReference type="HOGENOM" id="CLU_004485_1_1_5"/>
<dbReference type="InParanoid" id="Q3YSV8"/>
<dbReference type="Proteomes" id="UP000000435">
    <property type="component" value="Chromosome"/>
</dbReference>
<dbReference type="GO" id="GO:0005829">
    <property type="term" value="C:cytosol"/>
    <property type="evidence" value="ECO:0007669"/>
    <property type="project" value="TreeGrafter"/>
</dbReference>
<dbReference type="GO" id="GO:0004813">
    <property type="term" value="F:alanine-tRNA ligase activity"/>
    <property type="evidence" value="ECO:0007669"/>
    <property type="project" value="UniProtKB-UniRule"/>
</dbReference>
<dbReference type="GO" id="GO:0002161">
    <property type="term" value="F:aminoacyl-tRNA deacylase activity"/>
    <property type="evidence" value="ECO:0007669"/>
    <property type="project" value="TreeGrafter"/>
</dbReference>
<dbReference type="GO" id="GO:0005524">
    <property type="term" value="F:ATP binding"/>
    <property type="evidence" value="ECO:0007669"/>
    <property type="project" value="UniProtKB-UniRule"/>
</dbReference>
<dbReference type="GO" id="GO:0000049">
    <property type="term" value="F:tRNA binding"/>
    <property type="evidence" value="ECO:0007669"/>
    <property type="project" value="UniProtKB-KW"/>
</dbReference>
<dbReference type="GO" id="GO:0008270">
    <property type="term" value="F:zinc ion binding"/>
    <property type="evidence" value="ECO:0007669"/>
    <property type="project" value="UniProtKB-UniRule"/>
</dbReference>
<dbReference type="GO" id="GO:0006419">
    <property type="term" value="P:alanyl-tRNA aminoacylation"/>
    <property type="evidence" value="ECO:0007669"/>
    <property type="project" value="UniProtKB-UniRule"/>
</dbReference>
<dbReference type="GO" id="GO:0045892">
    <property type="term" value="P:negative regulation of DNA-templated transcription"/>
    <property type="evidence" value="ECO:0007669"/>
    <property type="project" value="TreeGrafter"/>
</dbReference>
<dbReference type="CDD" id="cd00673">
    <property type="entry name" value="AlaRS_core"/>
    <property type="match status" value="1"/>
</dbReference>
<dbReference type="FunFam" id="3.30.930.10:FF:000004">
    <property type="entry name" value="Alanine--tRNA ligase"/>
    <property type="match status" value="1"/>
</dbReference>
<dbReference type="FunFam" id="3.30.980.10:FF:000004">
    <property type="entry name" value="Alanine--tRNA ligase, cytoplasmic"/>
    <property type="match status" value="1"/>
</dbReference>
<dbReference type="Gene3D" id="2.40.30.130">
    <property type="match status" value="1"/>
</dbReference>
<dbReference type="Gene3D" id="3.10.310.40">
    <property type="match status" value="1"/>
</dbReference>
<dbReference type="Gene3D" id="3.30.54.20">
    <property type="match status" value="1"/>
</dbReference>
<dbReference type="Gene3D" id="3.30.930.10">
    <property type="entry name" value="Bira Bifunctional Protein, Domain 2"/>
    <property type="match status" value="1"/>
</dbReference>
<dbReference type="Gene3D" id="3.30.980.10">
    <property type="entry name" value="Threonyl-trna Synthetase, Chain A, domain 2"/>
    <property type="match status" value="1"/>
</dbReference>
<dbReference type="HAMAP" id="MF_00036_B">
    <property type="entry name" value="Ala_tRNA_synth_B"/>
    <property type="match status" value="1"/>
</dbReference>
<dbReference type="InterPro" id="IPR045864">
    <property type="entry name" value="aa-tRNA-synth_II/BPL/LPL"/>
</dbReference>
<dbReference type="InterPro" id="IPR002318">
    <property type="entry name" value="Ala-tRNA-lgiase_IIc"/>
</dbReference>
<dbReference type="InterPro" id="IPR018162">
    <property type="entry name" value="Ala-tRNA-ligase_IIc_anticod-bd"/>
</dbReference>
<dbReference type="InterPro" id="IPR018165">
    <property type="entry name" value="Ala-tRNA-synth_IIc_core"/>
</dbReference>
<dbReference type="InterPro" id="IPR018164">
    <property type="entry name" value="Ala-tRNA-synth_IIc_N"/>
</dbReference>
<dbReference type="InterPro" id="IPR050058">
    <property type="entry name" value="Ala-tRNA_ligase"/>
</dbReference>
<dbReference type="InterPro" id="IPR023033">
    <property type="entry name" value="Ala_tRNA_ligase_euk/bac"/>
</dbReference>
<dbReference type="InterPro" id="IPR018163">
    <property type="entry name" value="Thr/Ala-tRNA-synth_IIc_edit"/>
</dbReference>
<dbReference type="InterPro" id="IPR009000">
    <property type="entry name" value="Transl_B-barrel_sf"/>
</dbReference>
<dbReference type="InterPro" id="IPR012947">
    <property type="entry name" value="tRNA_SAD"/>
</dbReference>
<dbReference type="NCBIfam" id="TIGR00344">
    <property type="entry name" value="alaS"/>
    <property type="match status" value="1"/>
</dbReference>
<dbReference type="PANTHER" id="PTHR11777:SF9">
    <property type="entry name" value="ALANINE--TRNA LIGASE, CYTOPLASMIC"/>
    <property type="match status" value="1"/>
</dbReference>
<dbReference type="PANTHER" id="PTHR11777">
    <property type="entry name" value="ALANYL-TRNA SYNTHETASE"/>
    <property type="match status" value="1"/>
</dbReference>
<dbReference type="Pfam" id="PF01411">
    <property type="entry name" value="tRNA-synt_2c"/>
    <property type="match status" value="1"/>
</dbReference>
<dbReference type="Pfam" id="PF07973">
    <property type="entry name" value="tRNA_SAD"/>
    <property type="match status" value="1"/>
</dbReference>
<dbReference type="PRINTS" id="PR00980">
    <property type="entry name" value="TRNASYNTHALA"/>
</dbReference>
<dbReference type="SMART" id="SM00863">
    <property type="entry name" value="tRNA_SAD"/>
    <property type="match status" value="1"/>
</dbReference>
<dbReference type="SUPFAM" id="SSF55681">
    <property type="entry name" value="Class II aaRS and biotin synthetases"/>
    <property type="match status" value="1"/>
</dbReference>
<dbReference type="SUPFAM" id="SSF101353">
    <property type="entry name" value="Putative anticodon-binding domain of alanyl-tRNA synthetase (AlaRS)"/>
    <property type="match status" value="1"/>
</dbReference>
<dbReference type="SUPFAM" id="SSF55186">
    <property type="entry name" value="ThrRS/AlaRS common domain"/>
    <property type="match status" value="1"/>
</dbReference>
<dbReference type="SUPFAM" id="SSF50447">
    <property type="entry name" value="Translation proteins"/>
    <property type="match status" value="1"/>
</dbReference>
<dbReference type="PROSITE" id="PS50860">
    <property type="entry name" value="AA_TRNA_LIGASE_II_ALA"/>
    <property type="match status" value="1"/>
</dbReference>
<reference key="1">
    <citation type="journal article" date="2006" name="J. Bacteriol.">
        <title>The genome of the obligately intracellular bacterium Ehrlichia canis reveals themes of complex membrane structure and immune evasion strategies.</title>
        <authorList>
            <person name="Mavromatis K."/>
            <person name="Doyle C.K."/>
            <person name="Lykidis A."/>
            <person name="Ivanova N."/>
            <person name="Francino M.P."/>
            <person name="Chain P."/>
            <person name="Shin M."/>
            <person name="Malfatti S."/>
            <person name="Larimer F."/>
            <person name="Copeland A."/>
            <person name="Detter J.C."/>
            <person name="Land M."/>
            <person name="Richardson P.M."/>
            <person name="Yu X.J."/>
            <person name="Walker D.H."/>
            <person name="McBride J.W."/>
            <person name="Kyrpides N.C."/>
        </authorList>
    </citation>
    <scope>NUCLEOTIDE SEQUENCE [LARGE SCALE GENOMIC DNA]</scope>
    <source>
        <strain>Jake</strain>
    </source>
</reference>
<gene>
    <name evidence="1" type="primary">alaS</name>
    <name type="ordered locus">Ecaj_0146</name>
</gene>
<evidence type="ECO:0000255" key="1">
    <source>
        <dbReference type="HAMAP-Rule" id="MF_00036"/>
    </source>
</evidence>
<evidence type="ECO:0000305" key="2"/>